<evidence type="ECO:0000250" key="1"/>
<evidence type="ECO:0000255" key="2"/>
<evidence type="ECO:0000255" key="3">
    <source>
        <dbReference type="PROSITE-ProRule" id="PRU00031"/>
    </source>
</evidence>
<evidence type="ECO:0000305" key="4"/>
<keyword id="KW-1015">Disulfide bond</keyword>
<keyword id="KW-0646">Protease inhibitor</keyword>
<keyword id="KW-0964">Secreted</keyword>
<keyword id="KW-0722">Serine protease inhibitor</keyword>
<keyword id="KW-0732">Signal</keyword>
<organism>
    <name type="scientific">Hoplocephalus stephensii</name>
    <name type="common">Stephens's banded snake</name>
    <dbReference type="NCBI Taxonomy" id="196418"/>
    <lineage>
        <taxon>Eukaryota</taxon>
        <taxon>Metazoa</taxon>
        <taxon>Chordata</taxon>
        <taxon>Craniata</taxon>
        <taxon>Vertebrata</taxon>
        <taxon>Euteleostomi</taxon>
        <taxon>Lepidosauria</taxon>
        <taxon>Squamata</taxon>
        <taxon>Bifurcata</taxon>
        <taxon>Unidentata</taxon>
        <taxon>Episquamata</taxon>
        <taxon>Toxicofera</taxon>
        <taxon>Serpentes</taxon>
        <taxon>Colubroidea</taxon>
        <taxon>Elapidae</taxon>
        <taxon>Notechinae</taxon>
        <taxon>Hoplocephalus</taxon>
    </lineage>
</organism>
<dbReference type="EMBL" id="EU401855">
    <property type="protein sequence ID" value="ACC77804.1"/>
    <property type="molecule type" value="Genomic_DNA"/>
</dbReference>
<dbReference type="SMR" id="B5L5R7"/>
<dbReference type="GO" id="GO:0005576">
    <property type="term" value="C:extracellular region"/>
    <property type="evidence" value="ECO:0007669"/>
    <property type="project" value="UniProtKB-SubCell"/>
</dbReference>
<dbReference type="GO" id="GO:0004867">
    <property type="term" value="F:serine-type endopeptidase inhibitor activity"/>
    <property type="evidence" value="ECO:0007669"/>
    <property type="project" value="UniProtKB-KW"/>
</dbReference>
<dbReference type="CDD" id="cd22594">
    <property type="entry name" value="Kunitz_textilinin-like"/>
    <property type="match status" value="1"/>
</dbReference>
<dbReference type="FunFam" id="4.10.410.10:FF:000021">
    <property type="entry name" value="Serine protease inhibitor, putative"/>
    <property type="match status" value="1"/>
</dbReference>
<dbReference type="Gene3D" id="4.10.410.10">
    <property type="entry name" value="Pancreatic trypsin inhibitor Kunitz domain"/>
    <property type="match status" value="1"/>
</dbReference>
<dbReference type="InterPro" id="IPR002223">
    <property type="entry name" value="Kunitz_BPTI"/>
</dbReference>
<dbReference type="InterPro" id="IPR036880">
    <property type="entry name" value="Kunitz_BPTI_sf"/>
</dbReference>
<dbReference type="InterPro" id="IPR020901">
    <property type="entry name" value="Prtase_inh_Kunz-CS"/>
</dbReference>
<dbReference type="InterPro" id="IPR050098">
    <property type="entry name" value="TFPI/VKTCI-like"/>
</dbReference>
<dbReference type="PANTHER" id="PTHR10083">
    <property type="entry name" value="KUNITZ-TYPE PROTEASE INHIBITOR-RELATED"/>
    <property type="match status" value="1"/>
</dbReference>
<dbReference type="Pfam" id="PF00014">
    <property type="entry name" value="Kunitz_BPTI"/>
    <property type="match status" value="1"/>
</dbReference>
<dbReference type="PRINTS" id="PR00759">
    <property type="entry name" value="BASICPTASE"/>
</dbReference>
<dbReference type="SMART" id="SM00131">
    <property type="entry name" value="KU"/>
    <property type="match status" value="1"/>
</dbReference>
<dbReference type="SUPFAM" id="SSF57362">
    <property type="entry name" value="BPTI-like"/>
    <property type="match status" value="1"/>
</dbReference>
<dbReference type="PROSITE" id="PS00280">
    <property type="entry name" value="BPTI_KUNITZ_1"/>
    <property type="match status" value="1"/>
</dbReference>
<dbReference type="PROSITE" id="PS50279">
    <property type="entry name" value="BPTI_KUNITZ_2"/>
    <property type="match status" value="1"/>
</dbReference>
<accession>B5L5R7</accession>
<comment type="function">
    <text evidence="1">Serine protease inhibitor.</text>
</comment>
<comment type="subcellular location">
    <subcellularLocation>
        <location evidence="1">Secreted</location>
    </subcellularLocation>
</comment>
<comment type="tissue specificity">
    <text>Expressed by the venom gland.</text>
</comment>
<comment type="similarity">
    <text evidence="4">Belongs to the venom Kunitz-type family.</text>
</comment>
<proteinExistence type="inferred from homology"/>
<reference key="1">
    <citation type="journal article" date="2008" name="Cell. Mol. Life Sci.">
        <title>Common evolution of waprin and Kunitz-like toxin families in Australian venomous snakes.</title>
        <authorList>
            <person name="St Pierre L."/>
            <person name="Earl S.T."/>
            <person name="Filippovich I."/>
            <person name="Sorokina N."/>
            <person name="Masci P.P."/>
            <person name="De Jersey J."/>
            <person name="Lavin M.F."/>
        </authorList>
    </citation>
    <scope>NUCLEOTIDE SEQUENCE [GENOMIC DNA]</scope>
    <source>
        <tissue>Venom gland</tissue>
    </source>
</reference>
<feature type="signal peptide" evidence="2">
    <location>
        <begin position="1"/>
        <end position="24"/>
    </location>
</feature>
<feature type="chain" id="PRO_5000395655" description="Kunitz-type serine protease inhibitor stephenin-2">
    <location>
        <begin position="25"/>
        <end position="83"/>
    </location>
</feature>
<feature type="domain" description="BPTI/Kunitz inhibitor" evidence="3">
    <location>
        <begin position="31"/>
        <end position="81"/>
    </location>
</feature>
<feature type="site" description="Reactive bond for trypsin" evidence="1">
    <location>
        <begin position="41"/>
        <end position="42"/>
    </location>
</feature>
<feature type="disulfide bond" evidence="3">
    <location>
        <begin position="31"/>
        <end position="81"/>
    </location>
</feature>
<feature type="disulfide bond" evidence="3">
    <location>
        <begin position="40"/>
        <end position="64"/>
    </location>
</feature>
<feature type="disulfide bond" evidence="3">
    <location>
        <begin position="56"/>
        <end position="77"/>
    </location>
</feature>
<name>VKT2_HOPST</name>
<sequence length="83" mass="9054">MSSGGLLLLLGLLTLLEILTPVSSKDRPKFCELPADSGSCKGNFQAFYYNPDQHQCLEFIYGGCDGNANNFKTIDECKRTCAA</sequence>
<protein>
    <recommendedName>
        <fullName>Kunitz-type serine protease inhibitor stephenin-2</fullName>
    </recommendedName>
</protein>